<organism>
    <name type="scientific">Rattus norvegicus</name>
    <name type="common">Rat</name>
    <dbReference type="NCBI Taxonomy" id="10116"/>
    <lineage>
        <taxon>Eukaryota</taxon>
        <taxon>Metazoa</taxon>
        <taxon>Chordata</taxon>
        <taxon>Craniata</taxon>
        <taxon>Vertebrata</taxon>
        <taxon>Euteleostomi</taxon>
        <taxon>Mammalia</taxon>
        <taxon>Eutheria</taxon>
        <taxon>Euarchontoglires</taxon>
        <taxon>Glires</taxon>
        <taxon>Rodentia</taxon>
        <taxon>Myomorpha</taxon>
        <taxon>Muroidea</taxon>
        <taxon>Muridae</taxon>
        <taxon>Murinae</taxon>
        <taxon>Rattus</taxon>
    </lineage>
</organism>
<keyword id="KW-1003">Cell membrane</keyword>
<keyword id="KW-0141">cGMP biosynthesis</keyword>
<keyword id="KW-1015">Disulfide bond</keyword>
<keyword id="KW-0325">Glycoprotein</keyword>
<keyword id="KW-0342">GTP-binding</keyword>
<keyword id="KW-0456">Lyase</keyword>
<keyword id="KW-0472">Membrane</keyword>
<keyword id="KW-0547">Nucleotide-binding</keyword>
<keyword id="KW-0892">Osteogenesis</keyword>
<keyword id="KW-0597">Phosphoprotein</keyword>
<keyword id="KW-0675">Receptor</keyword>
<keyword id="KW-1185">Reference proteome</keyword>
<keyword id="KW-0732">Signal</keyword>
<keyword id="KW-0812">Transmembrane</keyword>
<keyword id="KW-1133">Transmembrane helix</keyword>
<sequence length="1047" mass="117127">MALPSLLLVVAALAGGVRPPGARNLTLAVVLPEHNLSYAWAWPRVGPAVALAVEALGRALPVDLRFVSSELDGACSEYLAPLRAVDLKLYHDPDLLLGPGCVYPAASVARFASHWHLPLLTAGAVASGFAAKNEHYRTLVRTGPSAPKLGEFVVTLHGHFNWTARAALLYLDARTDDRPHYFTIEGVFEALQGSNLSVQHQVYTREPGGPEQATHFIRANGRIVYICGPLEMLHEILLQAQRENLTNGDYVFFYLDVFGESLRAGPTRATGRPWQDNRTQEQAQALREAFQTVLVITYREPPNPEYQEFQNRLLIRAREDFGVELAPSLMNLIAGCFYDGILLYAQVLNETIQEGGTREDGLRIVEKMQGRRYHGVTGLVVMDKNNDRETDFVLWAMGDLESGDFQPAAHYSGAEKQIWWTGRPIPWVKGAPPLDNPPCAFDLDDPSCDKTPLSTLAIVALGTGITFIMFGVSSFLIFRKLMLEKELASMLWRIRWEELQFGNSDRYHKGAGSRLTLSLRGSSYGSLMTAHGKYQIFANTGHFKGNVVAIKHVNKKRIELTRQVLFELKHMRDVQFNHLTRFIGACIDPPNICIVTEYCPRGSLQDILENDSINLDWMFRYSLINDLVKGMAFLHNSIISSHGSLKSSNCVVDSRFVLKITDYGLASFRSTAEPDDSHALYAKKLWTAPELLSGNPLPTTGMQKADVYSFAIILQEIALRSGPFYLEGLDLSPKEIVQKVRNGQRPYFRPSIDRTQLNEELVLLMERCWAQDPTERPDFGQIKGFIRRFNKEGGTSILDNLLLRMEQYANNLEKLVEERTQAYLEEKRKAEALLYQILPHSVAEQLKRGETVQAEAFDSVTIYFSDIVGFTALSAESTPMQVVTLLNDLYTCFDAIIDNFDVYKVETIGDAYMVVSGLPGRNGQRHAPEIARMALALLDAVSSFRIRHRPHDQLRLRIGVHTGPVCAGVVGLKMPRYCLFGDTVNTASRMESNGQALKIHVSSTTKDALDELGCFQLELRGDVEMKGKGKMRTYWLLGERKGPPGLL</sequence>
<proteinExistence type="evidence at protein level"/>
<accession>P16067</accession>
<protein>
    <recommendedName>
        <fullName>Atrial natriuretic peptide receptor 2</fullName>
        <ecNumber evidence="3">4.6.1.2</ecNumber>
    </recommendedName>
    <alternativeName>
        <fullName>Atrial natriuretic peptide receptor type B</fullName>
        <shortName>ANP-B</shortName>
        <shortName>ANPR-B</shortName>
        <shortName>NPR-B</shortName>
    </alternativeName>
    <alternativeName>
        <fullName>Guanylate cyclase B</fullName>
        <shortName>GC-B</shortName>
    </alternativeName>
</protein>
<reference key="1">
    <citation type="journal article" date="1989" name="Cell">
        <title>The primary structure of a plasma membrane guanylate cyclase demonstrates diversity within this new receptor family.</title>
        <authorList>
            <person name="Schulz S."/>
            <person name="Singh S."/>
            <person name="Bellet R.A."/>
            <person name="Singh G."/>
            <person name="Tubb D.J."/>
            <person name="Chin H."/>
            <person name="Garbers D.L."/>
        </authorList>
    </citation>
    <scope>NUCLEOTIDE SEQUENCE [MRNA]</scope>
</reference>
<reference key="2">
    <citation type="journal article" date="1998" name="J. Biol. Chem.">
        <title>Identification and characterization of the major phosphorylation sites of the B-type natriuretic peptide receptor.</title>
        <authorList>
            <person name="Potter L.R."/>
            <person name="Hunter T."/>
        </authorList>
    </citation>
    <scope>PHOSPHORYLATION AT SER-513; THR-516; SER-518; SER-523 AND SER-526</scope>
    <scope>MUTAGENESIS OF SER-513; THR-516; SER-518; GLY-521; SER-522; SER-523; SER-526 AND THR-529</scope>
</reference>
<reference key="3">
    <citation type="journal article" date="2010" name="Biochemistry">
        <title>Mass spectrometric identification of phosphorylation sites in guanylyl cyclase A and B.</title>
        <authorList>
            <person name="Yoder A.R."/>
            <person name="Stone M.D."/>
            <person name="Griffin T.J."/>
            <person name="Potter L.R."/>
        </authorList>
    </citation>
    <scope>PHOSPHORYLATION AT SER-513; THR-516; SER-518; SER-523; SER-526 AND THR-529</scope>
</reference>
<comment type="function">
    <text evidence="3">Receptor for the C-type natriuretic peptide NPPC/CNP hormone. Has guanylate cyclase activity upon binding of its ligand. May play a role in the regulation of skeletal growth.</text>
</comment>
<comment type="catalytic activity">
    <reaction evidence="3">
        <text>GTP = 3',5'-cyclic GMP + diphosphate</text>
        <dbReference type="Rhea" id="RHEA:13665"/>
        <dbReference type="ChEBI" id="CHEBI:33019"/>
        <dbReference type="ChEBI" id="CHEBI:37565"/>
        <dbReference type="ChEBI" id="CHEBI:57746"/>
        <dbReference type="EC" id="4.6.1.2"/>
    </reaction>
</comment>
<comment type="subcellular location">
    <subcellularLocation>
        <location evidence="3">Cell membrane</location>
        <topology evidence="3">Single-pass type I membrane protein</topology>
    </subcellularLocation>
</comment>
<comment type="PTM">
    <text evidence="7 8">Phosphorylated. Phosphorylation of the protein kinase-like domain is required for full activation by CNP.</text>
</comment>
<comment type="PTM">
    <text evidence="3">Glycosylated.</text>
</comment>
<comment type="similarity">
    <text evidence="5">Belongs to the adenylyl cyclase class-4/guanylyl cyclase family.</text>
</comment>
<evidence type="ECO:0000250" key="1"/>
<evidence type="ECO:0000250" key="2">
    <source>
        <dbReference type="UniProtKB" id="P16066"/>
    </source>
</evidence>
<evidence type="ECO:0000250" key="3">
    <source>
        <dbReference type="UniProtKB" id="P20594"/>
    </source>
</evidence>
<evidence type="ECO:0000255" key="4"/>
<evidence type="ECO:0000255" key="5">
    <source>
        <dbReference type="PROSITE-ProRule" id="PRU00099"/>
    </source>
</evidence>
<evidence type="ECO:0000255" key="6">
    <source>
        <dbReference type="PROSITE-ProRule" id="PRU00159"/>
    </source>
</evidence>
<evidence type="ECO:0000269" key="7">
    <source>
    </source>
</evidence>
<evidence type="ECO:0000269" key="8">
    <source>
    </source>
</evidence>
<evidence type="ECO:0000305" key="9"/>
<gene>
    <name type="primary">Npr2</name>
</gene>
<name>ANPRB_RAT</name>
<dbReference type="EC" id="4.6.1.2" evidence="3"/>
<dbReference type="EMBL" id="M26896">
    <property type="protein sequence ID" value="AAA41205.1"/>
    <property type="molecule type" value="mRNA"/>
</dbReference>
<dbReference type="PIR" id="A33300">
    <property type="entry name" value="OYRTBR"/>
</dbReference>
<dbReference type="RefSeq" id="NP_446290.1">
    <property type="nucleotide sequence ID" value="NM_053838.1"/>
</dbReference>
<dbReference type="SMR" id="P16067"/>
<dbReference type="FunCoup" id="P16067">
    <property type="interactions" value="1300"/>
</dbReference>
<dbReference type="STRING" id="10116.ENSRNOP00000021802"/>
<dbReference type="GlyCosmos" id="P16067">
    <property type="glycosylation" value="7 sites, No reported glycans"/>
</dbReference>
<dbReference type="GlyGen" id="P16067">
    <property type="glycosylation" value="9 sites"/>
</dbReference>
<dbReference type="iPTMnet" id="P16067"/>
<dbReference type="PhosphoSitePlus" id="P16067"/>
<dbReference type="PaxDb" id="10116-ENSRNOP00000021802"/>
<dbReference type="GeneID" id="116564"/>
<dbReference type="KEGG" id="rno:116564"/>
<dbReference type="UCSC" id="RGD:620851">
    <property type="organism name" value="rat"/>
</dbReference>
<dbReference type="AGR" id="RGD:620851"/>
<dbReference type="CTD" id="4882"/>
<dbReference type="RGD" id="620851">
    <property type="gene designation" value="Npr2"/>
</dbReference>
<dbReference type="VEuPathDB" id="HostDB:ENSRNOG00000015991"/>
<dbReference type="eggNOG" id="KOG1023">
    <property type="taxonomic scope" value="Eukaryota"/>
</dbReference>
<dbReference type="HOGENOM" id="CLU_001072_1_3_1"/>
<dbReference type="InParanoid" id="P16067"/>
<dbReference type="OrthoDB" id="1890790at2759"/>
<dbReference type="PhylomeDB" id="P16067"/>
<dbReference type="TreeFam" id="TF106338"/>
<dbReference type="BRENDA" id="4.6.1.2">
    <property type="organism ID" value="5301"/>
</dbReference>
<dbReference type="Reactome" id="R-RNO-5578768">
    <property type="pathway name" value="Physiological factors"/>
</dbReference>
<dbReference type="PRO" id="PR:P16067"/>
<dbReference type="Proteomes" id="UP000002494">
    <property type="component" value="Chromosome 5"/>
</dbReference>
<dbReference type="Bgee" id="ENSRNOG00000015991">
    <property type="expression patterns" value="Expressed in heart and 20 other cell types or tissues"/>
</dbReference>
<dbReference type="GO" id="GO:0005929">
    <property type="term" value="C:cilium"/>
    <property type="evidence" value="ECO:0000266"/>
    <property type="project" value="RGD"/>
</dbReference>
<dbReference type="GO" id="GO:0005737">
    <property type="term" value="C:cytoplasm"/>
    <property type="evidence" value="ECO:0000266"/>
    <property type="project" value="RGD"/>
</dbReference>
<dbReference type="GO" id="GO:0043005">
    <property type="term" value="C:neuron projection"/>
    <property type="evidence" value="ECO:0000266"/>
    <property type="project" value="RGD"/>
</dbReference>
<dbReference type="GO" id="GO:0005634">
    <property type="term" value="C:nucleus"/>
    <property type="evidence" value="ECO:0000266"/>
    <property type="project" value="RGD"/>
</dbReference>
<dbReference type="GO" id="GO:0005886">
    <property type="term" value="C:plasma membrane"/>
    <property type="evidence" value="ECO:0000250"/>
    <property type="project" value="UniProtKB"/>
</dbReference>
<dbReference type="GO" id="GO:0045202">
    <property type="term" value="C:synapse"/>
    <property type="evidence" value="ECO:0007669"/>
    <property type="project" value="GOC"/>
</dbReference>
<dbReference type="GO" id="GO:0005524">
    <property type="term" value="F:ATP binding"/>
    <property type="evidence" value="ECO:0007669"/>
    <property type="project" value="InterPro"/>
</dbReference>
<dbReference type="GO" id="GO:0005525">
    <property type="term" value="F:GTP binding"/>
    <property type="evidence" value="ECO:0007669"/>
    <property type="project" value="UniProtKB-KW"/>
</dbReference>
<dbReference type="GO" id="GO:0004383">
    <property type="term" value="F:guanylate cyclase activity"/>
    <property type="evidence" value="ECO:0000266"/>
    <property type="project" value="RGD"/>
</dbReference>
<dbReference type="GO" id="GO:0042562">
    <property type="term" value="F:hormone binding"/>
    <property type="evidence" value="ECO:0000266"/>
    <property type="project" value="RGD"/>
</dbReference>
<dbReference type="GO" id="GO:0042802">
    <property type="term" value="F:identical protein binding"/>
    <property type="evidence" value="ECO:0000266"/>
    <property type="project" value="RGD"/>
</dbReference>
<dbReference type="GO" id="GO:0016941">
    <property type="term" value="F:natriuretic peptide receptor activity"/>
    <property type="evidence" value="ECO:0000266"/>
    <property type="project" value="RGD"/>
</dbReference>
<dbReference type="GO" id="GO:0017046">
    <property type="term" value="F:peptide hormone binding"/>
    <property type="evidence" value="ECO:0000315"/>
    <property type="project" value="RGD"/>
</dbReference>
<dbReference type="GO" id="GO:0004672">
    <property type="term" value="F:protein kinase activity"/>
    <property type="evidence" value="ECO:0007669"/>
    <property type="project" value="InterPro"/>
</dbReference>
<dbReference type="GO" id="GO:0060466">
    <property type="term" value="P:activation of meiosis involved in egg activation"/>
    <property type="evidence" value="ECO:0000266"/>
    <property type="project" value="RGD"/>
</dbReference>
<dbReference type="GO" id="GO:0007409">
    <property type="term" value="P:axonogenesis"/>
    <property type="evidence" value="ECO:0000266"/>
    <property type="project" value="RGD"/>
</dbReference>
<dbReference type="GO" id="GO:0060385">
    <property type="term" value="P:axonogenesis involved in innervation"/>
    <property type="evidence" value="ECO:0000266"/>
    <property type="project" value="RGD"/>
</dbReference>
<dbReference type="GO" id="GO:0008015">
    <property type="term" value="P:blood circulation"/>
    <property type="evidence" value="ECO:0000266"/>
    <property type="project" value="RGD"/>
</dbReference>
<dbReference type="GO" id="GO:0001568">
    <property type="term" value="P:blood vessel development"/>
    <property type="evidence" value="ECO:0000266"/>
    <property type="project" value="RGD"/>
</dbReference>
<dbReference type="GO" id="GO:0001974">
    <property type="term" value="P:blood vessel remodeling"/>
    <property type="evidence" value="ECO:0000266"/>
    <property type="project" value="RGD"/>
</dbReference>
<dbReference type="GO" id="GO:0060348">
    <property type="term" value="P:bone development"/>
    <property type="evidence" value="ECO:0000266"/>
    <property type="project" value="RGD"/>
</dbReference>
<dbReference type="GO" id="GO:0098868">
    <property type="term" value="P:bone growth"/>
    <property type="evidence" value="ECO:0000266"/>
    <property type="project" value="RGD"/>
</dbReference>
<dbReference type="GO" id="GO:0061939">
    <property type="term" value="P:c-di-GMP signaling"/>
    <property type="evidence" value="ECO:0000266"/>
    <property type="project" value="RGD"/>
</dbReference>
<dbReference type="GO" id="GO:0051216">
    <property type="term" value="P:cartilage development"/>
    <property type="evidence" value="ECO:0000266"/>
    <property type="project" value="RGD"/>
</dbReference>
<dbReference type="GO" id="GO:0071321">
    <property type="term" value="P:cellular response to cGMP"/>
    <property type="evidence" value="ECO:0000266"/>
    <property type="project" value="RGD"/>
</dbReference>
<dbReference type="GO" id="GO:0097011">
    <property type="term" value="P:cellular response to granulocyte macrophage colony-stimulating factor stimulus"/>
    <property type="evidence" value="ECO:0000266"/>
    <property type="project" value="RGD"/>
</dbReference>
<dbReference type="GO" id="GO:1901653">
    <property type="term" value="P:cellular response to peptide"/>
    <property type="evidence" value="ECO:0000266"/>
    <property type="project" value="RGD"/>
</dbReference>
<dbReference type="GO" id="GO:0006182">
    <property type="term" value="P:cGMP biosynthetic process"/>
    <property type="evidence" value="ECO:0000266"/>
    <property type="project" value="RGD"/>
</dbReference>
<dbReference type="GO" id="GO:0046068">
    <property type="term" value="P:cGMP metabolic process"/>
    <property type="evidence" value="ECO:0000266"/>
    <property type="project" value="RGD"/>
</dbReference>
<dbReference type="GO" id="GO:0019934">
    <property type="term" value="P:cGMP-mediated signaling"/>
    <property type="evidence" value="ECO:0000314"/>
    <property type="project" value="RGD"/>
</dbReference>
<dbReference type="GO" id="GO:0007268">
    <property type="term" value="P:chemical synaptic transmission"/>
    <property type="evidence" value="ECO:0000266"/>
    <property type="project" value="RGD"/>
</dbReference>
<dbReference type="GO" id="GO:0002062">
    <property type="term" value="P:chondrocyte differentiation"/>
    <property type="evidence" value="ECO:0000266"/>
    <property type="project" value="RGD"/>
</dbReference>
<dbReference type="GO" id="GO:0035988">
    <property type="term" value="P:chondrocyte proliferation"/>
    <property type="evidence" value="ECO:0000266"/>
    <property type="project" value="RGD"/>
</dbReference>
<dbReference type="GO" id="GO:0051276">
    <property type="term" value="P:chromosome organization"/>
    <property type="evidence" value="ECO:0000266"/>
    <property type="project" value="RGD"/>
</dbReference>
<dbReference type="GO" id="GO:0048668">
    <property type="term" value="P:collateral sprouting"/>
    <property type="evidence" value="ECO:0000266"/>
    <property type="project" value="RGD"/>
</dbReference>
<dbReference type="GO" id="GO:0001549">
    <property type="term" value="P:cumulus cell differentiation"/>
    <property type="evidence" value="ECO:0000266"/>
    <property type="project" value="RGD"/>
</dbReference>
<dbReference type="GO" id="GO:0048565">
    <property type="term" value="P:digestive tract development"/>
    <property type="evidence" value="ECO:0000266"/>
    <property type="project" value="RGD"/>
</dbReference>
<dbReference type="GO" id="GO:0048546">
    <property type="term" value="P:digestive tract morphogenesis"/>
    <property type="evidence" value="ECO:0000266"/>
    <property type="project" value="RGD"/>
</dbReference>
<dbReference type="GO" id="GO:0001958">
    <property type="term" value="P:endochondral ossification"/>
    <property type="evidence" value="ECO:0000266"/>
    <property type="project" value="RGD"/>
</dbReference>
<dbReference type="GO" id="GO:0007173">
    <property type="term" value="P:epidermal growth factor receptor signaling pathway"/>
    <property type="evidence" value="ECO:0000266"/>
    <property type="project" value="RGD"/>
</dbReference>
<dbReference type="GO" id="GO:0097194">
    <property type="term" value="P:execution phase of apoptosis"/>
    <property type="evidence" value="ECO:0000266"/>
    <property type="project" value="RGD"/>
</dbReference>
<dbReference type="GO" id="GO:0030540">
    <property type="term" value="P:female genitalia development"/>
    <property type="evidence" value="ECO:0000266"/>
    <property type="project" value="RGD"/>
</dbReference>
<dbReference type="GO" id="GO:0035483">
    <property type="term" value="P:gastric emptying"/>
    <property type="evidence" value="ECO:0000266"/>
    <property type="project" value="RGD"/>
</dbReference>
<dbReference type="GO" id="GO:0035112">
    <property type="term" value="P:genitalia morphogenesis"/>
    <property type="evidence" value="ECO:0000266"/>
    <property type="project" value="RGD"/>
</dbReference>
<dbReference type="GO" id="GO:0007281">
    <property type="term" value="P:germ cell development"/>
    <property type="evidence" value="ECO:0000266"/>
    <property type="project" value="RGD"/>
</dbReference>
<dbReference type="GO" id="GO:0003417">
    <property type="term" value="P:growth plate cartilage development"/>
    <property type="evidence" value="ECO:0000266"/>
    <property type="project" value="RGD"/>
</dbReference>
<dbReference type="GO" id="GO:0060173">
    <property type="term" value="P:limb development"/>
    <property type="evidence" value="ECO:0000266"/>
    <property type="project" value="RGD"/>
</dbReference>
<dbReference type="GO" id="GO:0035108">
    <property type="term" value="P:limb morphogenesis"/>
    <property type="evidence" value="ECO:0000266"/>
    <property type="project" value="RGD"/>
</dbReference>
<dbReference type="GO" id="GO:0001945">
    <property type="term" value="P:lymph vessel development"/>
    <property type="evidence" value="ECO:0000266"/>
    <property type="project" value="RGD"/>
</dbReference>
<dbReference type="GO" id="GO:0000165">
    <property type="term" value="P:MAPK cascade"/>
    <property type="evidence" value="ECO:0000266"/>
    <property type="project" value="RGD"/>
</dbReference>
<dbReference type="GO" id="GO:0051321">
    <property type="term" value="P:meiotic cell cycle"/>
    <property type="evidence" value="ECO:0000266"/>
    <property type="project" value="RGD"/>
</dbReference>
<dbReference type="GO" id="GO:1903537">
    <property type="term" value="P:meiotic cell cycle process involved in oocyte maturation"/>
    <property type="evidence" value="ECO:0000266"/>
    <property type="project" value="RGD"/>
</dbReference>
<dbReference type="GO" id="GO:0035264">
    <property type="term" value="P:multicellular organism growth"/>
    <property type="evidence" value="ECO:0000266"/>
    <property type="project" value="RGD"/>
</dbReference>
<dbReference type="GO" id="GO:0051447">
    <property type="term" value="P:negative regulation of meiotic cell cycle"/>
    <property type="evidence" value="ECO:0000266"/>
    <property type="project" value="RGD"/>
</dbReference>
<dbReference type="GO" id="GO:1900194">
    <property type="term" value="P:negative regulation of oocyte maturation"/>
    <property type="evidence" value="ECO:0000266"/>
    <property type="project" value="RGD"/>
</dbReference>
<dbReference type="GO" id="GO:0021675">
    <property type="term" value="P:nerve development"/>
    <property type="evidence" value="ECO:0000266"/>
    <property type="project" value="RGD"/>
</dbReference>
<dbReference type="GO" id="GO:0051402">
    <property type="term" value="P:neuron apoptotic process"/>
    <property type="evidence" value="ECO:0000266"/>
    <property type="project" value="RGD"/>
</dbReference>
<dbReference type="GO" id="GO:0019228">
    <property type="term" value="P:neuronal action potential"/>
    <property type="evidence" value="ECO:0000266"/>
    <property type="project" value="RGD"/>
</dbReference>
<dbReference type="GO" id="GO:0048599">
    <property type="term" value="P:oocyte development"/>
    <property type="evidence" value="ECO:0000266"/>
    <property type="project" value="RGD"/>
</dbReference>
<dbReference type="GO" id="GO:0001541">
    <property type="term" value="P:ovarian follicle development"/>
    <property type="evidence" value="ECO:0000266"/>
    <property type="project" value="RGD"/>
</dbReference>
<dbReference type="GO" id="GO:0010753">
    <property type="term" value="P:positive regulation of cGMP-mediated signaling"/>
    <property type="evidence" value="ECO:0000314"/>
    <property type="project" value="RGD"/>
</dbReference>
<dbReference type="GO" id="GO:0010641">
    <property type="term" value="P:positive regulation of platelet-derived growth factor receptor signaling pathway"/>
    <property type="evidence" value="ECO:0000315"/>
    <property type="project" value="RGD"/>
</dbReference>
<dbReference type="GO" id="GO:0036342">
    <property type="term" value="P:post-anal tail morphogenesis"/>
    <property type="evidence" value="ECO:0000266"/>
    <property type="project" value="RGD"/>
</dbReference>
<dbReference type="GO" id="GO:0007168">
    <property type="term" value="P:receptor guanylyl cyclase signaling pathway"/>
    <property type="evidence" value="ECO:0000250"/>
    <property type="project" value="UniProtKB"/>
</dbReference>
<dbReference type="GO" id="GO:0071774">
    <property type="term" value="P:response to fibroblast growth factor"/>
    <property type="evidence" value="ECO:0000266"/>
    <property type="project" value="RGD"/>
</dbReference>
<dbReference type="GO" id="GO:0009725">
    <property type="term" value="P:response to hormone"/>
    <property type="evidence" value="ECO:0000266"/>
    <property type="project" value="RGD"/>
</dbReference>
<dbReference type="GO" id="GO:0034699">
    <property type="term" value="P:response to luteinizing hormone"/>
    <property type="evidence" value="ECO:0000266"/>
    <property type="project" value="RGD"/>
</dbReference>
<dbReference type="GO" id="GO:1902074">
    <property type="term" value="P:response to salt"/>
    <property type="evidence" value="ECO:0000266"/>
    <property type="project" value="RGD"/>
</dbReference>
<dbReference type="GO" id="GO:0009611">
    <property type="term" value="P:response to wounding"/>
    <property type="evidence" value="ECO:0000266"/>
    <property type="project" value="RGD"/>
</dbReference>
<dbReference type="GO" id="GO:0007605">
    <property type="term" value="P:sensory perception of sound"/>
    <property type="evidence" value="ECO:0000266"/>
    <property type="project" value="RGD"/>
</dbReference>
<dbReference type="GO" id="GO:0007338">
    <property type="term" value="P:single fertilization"/>
    <property type="evidence" value="ECO:0000266"/>
    <property type="project" value="RGD"/>
</dbReference>
<dbReference type="GO" id="GO:0048745">
    <property type="term" value="P:smooth muscle tissue development"/>
    <property type="evidence" value="ECO:0000266"/>
    <property type="project" value="RGD"/>
</dbReference>
<dbReference type="GO" id="GO:0007283">
    <property type="term" value="P:spermatogenesis"/>
    <property type="evidence" value="ECO:0000266"/>
    <property type="project" value="RGD"/>
</dbReference>
<dbReference type="GO" id="GO:0001964">
    <property type="term" value="P:startle response"/>
    <property type="evidence" value="ECO:0000266"/>
    <property type="project" value="RGD"/>
</dbReference>
<dbReference type="GO" id="GO:0007033">
    <property type="term" value="P:vacuole organization"/>
    <property type="evidence" value="ECO:0000266"/>
    <property type="project" value="RGD"/>
</dbReference>
<dbReference type="GO" id="GO:0061042">
    <property type="term" value="P:vascular wound healing"/>
    <property type="evidence" value="ECO:0000266"/>
    <property type="project" value="RGD"/>
</dbReference>
<dbReference type="GO" id="GO:0001570">
    <property type="term" value="P:vasculogenesis"/>
    <property type="evidence" value="ECO:0000266"/>
    <property type="project" value="RGD"/>
</dbReference>
<dbReference type="GO" id="GO:0021562">
    <property type="term" value="P:vestibulocochlear nerve development"/>
    <property type="evidence" value="ECO:0000266"/>
    <property type="project" value="RGD"/>
</dbReference>
<dbReference type="GO" id="GO:0021647">
    <property type="term" value="P:vestibulocochlear nerve maturation"/>
    <property type="evidence" value="ECO:0000266"/>
    <property type="project" value="RGD"/>
</dbReference>
<dbReference type="GO" id="GO:0050872">
    <property type="term" value="P:white fat cell differentiation"/>
    <property type="evidence" value="ECO:0000266"/>
    <property type="project" value="RGD"/>
</dbReference>
<dbReference type="GO" id="GO:0042060">
    <property type="term" value="P:wound healing"/>
    <property type="evidence" value="ECO:0000315"/>
    <property type="project" value="RGD"/>
</dbReference>
<dbReference type="CDD" id="cd07302">
    <property type="entry name" value="CHD"/>
    <property type="match status" value="1"/>
</dbReference>
<dbReference type="CDD" id="cd06384">
    <property type="entry name" value="PBP1_NPR_B"/>
    <property type="match status" value="1"/>
</dbReference>
<dbReference type="CDD" id="cd14042">
    <property type="entry name" value="PK_GC-A_B"/>
    <property type="match status" value="1"/>
</dbReference>
<dbReference type="FunFam" id="1.10.510.10:FF:000270">
    <property type="entry name" value="Guanylate cyclase"/>
    <property type="match status" value="1"/>
</dbReference>
<dbReference type="FunFam" id="3.30.200.20:FF:001106">
    <property type="entry name" value="Guanylate cyclase"/>
    <property type="match status" value="1"/>
</dbReference>
<dbReference type="FunFam" id="3.30.70.1230:FF:000004">
    <property type="entry name" value="Guanylate cyclase"/>
    <property type="match status" value="1"/>
</dbReference>
<dbReference type="FunFam" id="3.40.50.2300:FF:000101">
    <property type="entry name" value="Guanylate cyclase"/>
    <property type="match status" value="1"/>
</dbReference>
<dbReference type="FunFam" id="3.40.50.2300:FF:000245">
    <property type="entry name" value="Guanylate cyclase"/>
    <property type="match status" value="1"/>
</dbReference>
<dbReference type="Gene3D" id="3.40.50.2300">
    <property type="match status" value="3"/>
</dbReference>
<dbReference type="Gene3D" id="3.30.70.1230">
    <property type="entry name" value="Nucleotide cyclase"/>
    <property type="match status" value="1"/>
</dbReference>
<dbReference type="Gene3D" id="1.10.510.10">
    <property type="entry name" value="Transferase(Phosphotransferase) domain 1"/>
    <property type="match status" value="1"/>
</dbReference>
<dbReference type="InterPro" id="IPR001054">
    <property type="entry name" value="A/G_cyclase"/>
</dbReference>
<dbReference type="InterPro" id="IPR018297">
    <property type="entry name" value="A/G_cyclase_CS"/>
</dbReference>
<dbReference type="InterPro" id="IPR001828">
    <property type="entry name" value="ANF_lig-bd_rcpt"/>
</dbReference>
<dbReference type="InterPro" id="IPR001170">
    <property type="entry name" value="ANPR/GUC"/>
</dbReference>
<dbReference type="InterPro" id="IPR050401">
    <property type="entry name" value="Cyclic_nucleotide_synthase"/>
</dbReference>
<dbReference type="InterPro" id="IPR011009">
    <property type="entry name" value="Kinase-like_dom_sf"/>
</dbReference>
<dbReference type="InterPro" id="IPR029787">
    <property type="entry name" value="Nucleotide_cyclase"/>
</dbReference>
<dbReference type="InterPro" id="IPR028082">
    <property type="entry name" value="Peripla_BP_I"/>
</dbReference>
<dbReference type="InterPro" id="IPR000719">
    <property type="entry name" value="Prot_kinase_dom"/>
</dbReference>
<dbReference type="InterPro" id="IPR001245">
    <property type="entry name" value="Ser-Thr/Tyr_kinase_cat_dom"/>
</dbReference>
<dbReference type="PANTHER" id="PTHR11920:SF494">
    <property type="entry name" value="ATRIAL NATRIURETIC PEPTIDE RECEPTOR 2"/>
    <property type="match status" value="1"/>
</dbReference>
<dbReference type="PANTHER" id="PTHR11920">
    <property type="entry name" value="GUANYLYL CYCLASE"/>
    <property type="match status" value="1"/>
</dbReference>
<dbReference type="Pfam" id="PF01094">
    <property type="entry name" value="ANF_receptor"/>
    <property type="match status" value="1"/>
</dbReference>
<dbReference type="Pfam" id="PF00211">
    <property type="entry name" value="Guanylate_cyc"/>
    <property type="match status" value="1"/>
</dbReference>
<dbReference type="Pfam" id="PF07714">
    <property type="entry name" value="PK_Tyr_Ser-Thr"/>
    <property type="match status" value="1"/>
</dbReference>
<dbReference type="PRINTS" id="PR00255">
    <property type="entry name" value="NATPEPTIDER"/>
</dbReference>
<dbReference type="SMART" id="SM00044">
    <property type="entry name" value="CYCc"/>
    <property type="match status" value="1"/>
</dbReference>
<dbReference type="SUPFAM" id="SSF55073">
    <property type="entry name" value="Nucleotide cyclase"/>
    <property type="match status" value="1"/>
</dbReference>
<dbReference type="SUPFAM" id="SSF53822">
    <property type="entry name" value="Periplasmic binding protein-like I"/>
    <property type="match status" value="1"/>
</dbReference>
<dbReference type="SUPFAM" id="SSF56112">
    <property type="entry name" value="Protein kinase-like (PK-like)"/>
    <property type="match status" value="1"/>
</dbReference>
<dbReference type="PROSITE" id="PS00458">
    <property type="entry name" value="ANF_RECEPTORS"/>
    <property type="match status" value="1"/>
</dbReference>
<dbReference type="PROSITE" id="PS00452">
    <property type="entry name" value="GUANYLATE_CYCLASE_1"/>
    <property type="match status" value="1"/>
</dbReference>
<dbReference type="PROSITE" id="PS50125">
    <property type="entry name" value="GUANYLATE_CYCLASE_2"/>
    <property type="match status" value="1"/>
</dbReference>
<dbReference type="PROSITE" id="PS50011">
    <property type="entry name" value="PROTEIN_KINASE_DOM"/>
    <property type="match status" value="1"/>
</dbReference>
<feature type="signal peptide" evidence="4">
    <location>
        <begin position="1"/>
        <end position="16"/>
    </location>
</feature>
<feature type="chain" id="PRO_0000012366" description="Atrial natriuretic peptide receptor 2">
    <location>
        <begin position="17"/>
        <end position="1047"/>
    </location>
</feature>
<feature type="topological domain" description="Extracellular" evidence="4">
    <location>
        <begin position="17"/>
        <end position="458"/>
    </location>
</feature>
<feature type="transmembrane region" description="Helical" evidence="4">
    <location>
        <begin position="459"/>
        <end position="478"/>
    </location>
</feature>
<feature type="topological domain" description="Cytoplasmic" evidence="4">
    <location>
        <begin position="479"/>
        <end position="1047"/>
    </location>
</feature>
<feature type="domain" description="Protein kinase" evidence="6">
    <location>
        <begin position="513"/>
        <end position="786"/>
    </location>
</feature>
<feature type="domain" description="Guanylate cyclase" evidence="5">
    <location>
        <begin position="861"/>
        <end position="991"/>
    </location>
</feature>
<feature type="modified residue" description="Phosphoserine" evidence="7 8">
    <location>
        <position position="513"/>
    </location>
</feature>
<feature type="modified residue" description="Phosphothreonine" evidence="7 8">
    <location>
        <position position="516"/>
    </location>
</feature>
<feature type="modified residue" description="Phosphoserine" evidence="7 8">
    <location>
        <position position="518"/>
    </location>
</feature>
<feature type="modified residue" description="Phosphoserine" evidence="2">
    <location>
        <position position="522"/>
    </location>
</feature>
<feature type="modified residue" description="Phosphoserine" evidence="7 8">
    <location>
        <position position="523"/>
    </location>
</feature>
<feature type="modified residue" description="Phosphoserine" evidence="7 8">
    <location>
        <position position="526"/>
    </location>
</feature>
<feature type="modified residue" description="Phosphothreonine" evidence="7">
    <location>
        <position position="529"/>
    </location>
</feature>
<feature type="glycosylation site" description="N-linked (GlcNAc...) asparagine" evidence="4">
    <location>
        <position position="24"/>
    </location>
</feature>
<feature type="glycosylation site" description="N-linked (GlcNAc...) asparagine" evidence="4">
    <location>
        <position position="35"/>
    </location>
</feature>
<feature type="glycosylation site" description="N-linked (GlcNAc...) asparagine" evidence="4">
    <location>
        <position position="161"/>
    </location>
</feature>
<feature type="glycosylation site" description="N-linked (GlcNAc...) asparagine" evidence="4">
    <location>
        <position position="195"/>
    </location>
</feature>
<feature type="glycosylation site" description="N-linked (GlcNAc...) asparagine" evidence="4">
    <location>
        <position position="244"/>
    </location>
</feature>
<feature type="glycosylation site" description="N-linked (GlcNAc...) asparagine" evidence="4">
    <location>
        <position position="277"/>
    </location>
</feature>
<feature type="glycosylation site" description="N-linked (GlcNAc...) asparagine" evidence="4">
    <location>
        <position position="349"/>
    </location>
</feature>
<feature type="disulfide bond" evidence="1">
    <location>
        <begin position="75"/>
        <end position="101"/>
    </location>
</feature>
<feature type="disulfide bond" description="Interchain" evidence="9">
    <location>
        <position position="439"/>
    </location>
</feature>
<feature type="disulfide bond" description="Interchain" evidence="9">
    <location>
        <position position="448"/>
    </location>
</feature>
<feature type="mutagenesis site" description="Reduced phosphorylation, 30% loss of CNP-dependent activity." evidence="8">
    <original>S</original>
    <variation>A</variation>
    <location>
        <position position="513"/>
    </location>
</feature>
<feature type="mutagenesis site" description="Reduced phosphorylation, 30% loss of CNP-dependent activity." evidence="8">
    <original>T</original>
    <variation>A</variation>
    <location>
        <position position="516"/>
    </location>
</feature>
<feature type="mutagenesis site" description="Reduced phosphorylation, 30% loss of CNP-dependent activity." evidence="8">
    <original>S</original>
    <variation>A</variation>
    <location>
        <position position="518"/>
    </location>
</feature>
<feature type="mutagenesis site" description="Reduced phosphorylation, 50% loss of CNP-dependent activity." evidence="8">
    <original>G</original>
    <variation>A</variation>
    <location>
        <position position="521"/>
    </location>
</feature>
<feature type="mutagenesis site" description="Reduced phosphorylation, 30% loss of CNP-dependent activity." evidence="8">
    <original>S</original>
    <variation>A</variation>
    <location>
        <position position="522"/>
    </location>
</feature>
<feature type="mutagenesis site" description="Markedly reduced phosphorylation, 70% loss of CNP-dependent activity." evidence="8">
    <original>S</original>
    <variation>A</variation>
    <location>
        <position position="523"/>
    </location>
</feature>
<feature type="mutagenesis site" description="Markedly reduced phosphorylation, 80% loss of CNP-dependent activity." evidence="8">
    <original>S</original>
    <variation>A</variation>
    <location>
        <position position="526"/>
    </location>
</feature>
<feature type="mutagenesis site" description="No effect on phosphorylation, 30% loss of CNP-dependent activity." evidence="8">
    <original>T</original>
    <variation>A</variation>
    <location>
        <position position="529"/>
    </location>
</feature>